<evidence type="ECO:0000255" key="1">
    <source>
        <dbReference type="HAMAP-Rule" id="MF_00380"/>
    </source>
</evidence>
<sequence>MTGTGKTVTRVDLCEAVYKKVGLSRTESSAFVELVLKEITDCLEKGETVKLSSFGSFMVRKKGQRIGRNPKTGTEVPISPRRVMVFKPSAILKQRINSNGAGGKTD</sequence>
<name>IHFA_NITWN</name>
<organism>
    <name type="scientific">Nitrobacter winogradskyi (strain ATCC 25391 / DSM 10237 / CIP 104748 / NCIMB 11846 / Nb-255)</name>
    <dbReference type="NCBI Taxonomy" id="323098"/>
    <lineage>
        <taxon>Bacteria</taxon>
        <taxon>Pseudomonadati</taxon>
        <taxon>Pseudomonadota</taxon>
        <taxon>Alphaproteobacteria</taxon>
        <taxon>Hyphomicrobiales</taxon>
        <taxon>Nitrobacteraceae</taxon>
        <taxon>Nitrobacter</taxon>
    </lineage>
</organism>
<accession>Q3SSS2</accession>
<keyword id="KW-0233">DNA recombination</keyword>
<keyword id="KW-0238">DNA-binding</keyword>
<keyword id="KW-1185">Reference proteome</keyword>
<keyword id="KW-0804">Transcription</keyword>
<keyword id="KW-0805">Transcription regulation</keyword>
<keyword id="KW-0810">Translation regulation</keyword>
<reference key="1">
    <citation type="journal article" date="2006" name="Appl. Environ. Microbiol.">
        <title>Genome sequence of the chemolithoautotrophic nitrite-oxidizing bacterium Nitrobacter winogradskyi Nb-255.</title>
        <authorList>
            <person name="Starkenburg S.R."/>
            <person name="Chain P.S.G."/>
            <person name="Sayavedra-Soto L.A."/>
            <person name="Hauser L."/>
            <person name="Land M.L."/>
            <person name="Larimer F.W."/>
            <person name="Malfatti S.A."/>
            <person name="Klotz M.G."/>
            <person name="Bottomley P.J."/>
            <person name="Arp D.J."/>
            <person name="Hickey W.J."/>
        </authorList>
    </citation>
    <scope>NUCLEOTIDE SEQUENCE [LARGE SCALE GENOMIC DNA]</scope>
    <source>
        <strain>ATCC 25391 / DSM 10237 / CIP 104748 / NCIMB 11846 / Nb-255</strain>
    </source>
</reference>
<dbReference type="EMBL" id="CP000115">
    <property type="protein sequence ID" value="ABA04669.1"/>
    <property type="molecule type" value="Genomic_DNA"/>
</dbReference>
<dbReference type="RefSeq" id="WP_011314678.1">
    <property type="nucleotide sequence ID" value="NC_007406.1"/>
</dbReference>
<dbReference type="SMR" id="Q3SSS2"/>
<dbReference type="STRING" id="323098.Nwi_1408"/>
<dbReference type="KEGG" id="nwi:Nwi_1408"/>
<dbReference type="eggNOG" id="COG0776">
    <property type="taxonomic scope" value="Bacteria"/>
</dbReference>
<dbReference type="HOGENOM" id="CLU_105066_1_1_5"/>
<dbReference type="OrthoDB" id="9797747at2"/>
<dbReference type="Proteomes" id="UP000002531">
    <property type="component" value="Chromosome"/>
</dbReference>
<dbReference type="GO" id="GO:0005829">
    <property type="term" value="C:cytosol"/>
    <property type="evidence" value="ECO:0007669"/>
    <property type="project" value="TreeGrafter"/>
</dbReference>
<dbReference type="GO" id="GO:0003677">
    <property type="term" value="F:DNA binding"/>
    <property type="evidence" value="ECO:0007669"/>
    <property type="project" value="UniProtKB-UniRule"/>
</dbReference>
<dbReference type="GO" id="GO:0030527">
    <property type="term" value="F:structural constituent of chromatin"/>
    <property type="evidence" value="ECO:0007669"/>
    <property type="project" value="InterPro"/>
</dbReference>
<dbReference type="GO" id="GO:0006310">
    <property type="term" value="P:DNA recombination"/>
    <property type="evidence" value="ECO:0007669"/>
    <property type="project" value="UniProtKB-UniRule"/>
</dbReference>
<dbReference type="GO" id="GO:0009893">
    <property type="term" value="P:positive regulation of metabolic process"/>
    <property type="evidence" value="ECO:0007669"/>
    <property type="project" value="UniProtKB-ARBA"/>
</dbReference>
<dbReference type="GO" id="GO:0006355">
    <property type="term" value="P:regulation of DNA-templated transcription"/>
    <property type="evidence" value="ECO:0007669"/>
    <property type="project" value="UniProtKB-UniRule"/>
</dbReference>
<dbReference type="GO" id="GO:0006417">
    <property type="term" value="P:regulation of translation"/>
    <property type="evidence" value="ECO:0007669"/>
    <property type="project" value="UniProtKB-UniRule"/>
</dbReference>
<dbReference type="CDD" id="cd13835">
    <property type="entry name" value="IHF_A"/>
    <property type="match status" value="1"/>
</dbReference>
<dbReference type="FunFam" id="4.10.520.10:FF:000010">
    <property type="entry name" value="Integration host factor subunit alpha"/>
    <property type="match status" value="1"/>
</dbReference>
<dbReference type="Gene3D" id="4.10.520.10">
    <property type="entry name" value="IHF-like DNA-binding proteins"/>
    <property type="match status" value="1"/>
</dbReference>
<dbReference type="HAMAP" id="MF_00380">
    <property type="entry name" value="IHF_alpha"/>
    <property type="match status" value="1"/>
</dbReference>
<dbReference type="InterPro" id="IPR000119">
    <property type="entry name" value="Hist_DNA-bd"/>
</dbReference>
<dbReference type="InterPro" id="IPR020816">
    <property type="entry name" value="Histone-like_DNA-bd_CS"/>
</dbReference>
<dbReference type="InterPro" id="IPR010992">
    <property type="entry name" value="IHF-like_DNA-bd_dom_sf"/>
</dbReference>
<dbReference type="InterPro" id="IPR005684">
    <property type="entry name" value="IHF_alpha"/>
</dbReference>
<dbReference type="NCBIfam" id="TIGR00987">
    <property type="entry name" value="himA"/>
    <property type="match status" value="1"/>
</dbReference>
<dbReference type="NCBIfam" id="NF001401">
    <property type="entry name" value="PRK00285.1"/>
    <property type="match status" value="1"/>
</dbReference>
<dbReference type="PANTHER" id="PTHR33175">
    <property type="entry name" value="DNA-BINDING PROTEIN HU"/>
    <property type="match status" value="1"/>
</dbReference>
<dbReference type="PANTHER" id="PTHR33175:SF2">
    <property type="entry name" value="INTEGRATION HOST FACTOR SUBUNIT ALPHA"/>
    <property type="match status" value="1"/>
</dbReference>
<dbReference type="Pfam" id="PF00216">
    <property type="entry name" value="Bac_DNA_binding"/>
    <property type="match status" value="1"/>
</dbReference>
<dbReference type="PRINTS" id="PR01727">
    <property type="entry name" value="DNABINDINGHU"/>
</dbReference>
<dbReference type="SMART" id="SM00411">
    <property type="entry name" value="BHL"/>
    <property type="match status" value="1"/>
</dbReference>
<dbReference type="SUPFAM" id="SSF47729">
    <property type="entry name" value="IHF-like DNA-binding proteins"/>
    <property type="match status" value="1"/>
</dbReference>
<dbReference type="PROSITE" id="PS00045">
    <property type="entry name" value="HISTONE_LIKE"/>
    <property type="match status" value="1"/>
</dbReference>
<proteinExistence type="inferred from homology"/>
<gene>
    <name evidence="1" type="primary">ihfA</name>
    <name evidence="1" type="synonym">himA</name>
    <name type="ordered locus">Nwi_1408</name>
</gene>
<feature type="chain" id="PRO_1000060551" description="Integration host factor subunit alpha">
    <location>
        <begin position="1"/>
        <end position="106"/>
    </location>
</feature>
<comment type="function">
    <text evidence="1">This protein is one of the two subunits of integration host factor, a specific DNA-binding protein that functions in genetic recombination as well as in transcriptional and translational control.</text>
</comment>
<comment type="subunit">
    <text evidence="1">Heterodimer of an alpha and a beta chain.</text>
</comment>
<comment type="similarity">
    <text evidence="1">Belongs to the bacterial histone-like protein family.</text>
</comment>
<protein>
    <recommendedName>
        <fullName evidence="1">Integration host factor subunit alpha</fullName>
        <shortName evidence="1">IHF-alpha</shortName>
    </recommendedName>
</protein>